<accession>B3QM27</accession>
<organism>
    <name type="scientific">Chlorobaculum parvum (strain DSM 263 / NCIMB 8327)</name>
    <name type="common">Chlorobium vibrioforme subsp. thiosulfatophilum</name>
    <dbReference type="NCBI Taxonomy" id="517417"/>
    <lineage>
        <taxon>Bacteria</taxon>
        <taxon>Pseudomonadati</taxon>
        <taxon>Chlorobiota</taxon>
        <taxon>Chlorobiia</taxon>
        <taxon>Chlorobiales</taxon>
        <taxon>Chlorobiaceae</taxon>
        <taxon>Chlorobaculum</taxon>
    </lineage>
</organism>
<name>RUVB_CHLP8</name>
<comment type="function">
    <text evidence="1">The RuvA-RuvB-RuvC complex processes Holliday junction (HJ) DNA during genetic recombination and DNA repair, while the RuvA-RuvB complex plays an important role in the rescue of blocked DNA replication forks via replication fork reversal (RFR). RuvA specifically binds to HJ cruciform DNA, conferring on it an open structure. The RuvB hexamer acts as an ATP-dependent pump, pulling dsDNA into and through the RuvAB complex. RuvB forms 2 homohexamers on either side of HJ DNA bound by 1 or 2 RuvA tetramers; 4 subunits per hexamer contact DNA at a time. Coordinated motions by a converter formed by DNA-disengaged RuvB subunits stimulates ATP hydrolysis and nucleotide exchange. Immobilization of the converter enables RuvB to convert the ATP-contained energy into a lever motion, pulling 2 nucleotides of DNA out of the RuvA tetramer per ATP hydrolyzed, thus driving DNA branch migration. The RuvB motors rotate together with the DNA substrate, which together with the progressing nucleotide cycle form the mechanistic basis for DNA recombination by continuous HJ branch migration. Branch migration allows RuvC to scan DNA until it finds its consensus sequence, where it cleaves and resolves cruciform DNA.</text>
</comment>
<comment type="catalytic activity">
    <reaction evidence="1">
        <text>ATP + H2O = ADP + phosphate + H(+)</text>
        <dbReference type="Rhea" id="RHEA:13065"/>
        <dbReference type="ChEBI" id="CHEBI:15377"/>
        <dbReference type="ChEBI" id="CHEBI:15378"/>
        <dbReference type="ChEBI" id="CHEBI:30616"/>
        <dbReference type="ChEBI" id="CHEBI:43474"/>
        <dbReference type="ChEBI" id="CHEBI:456216"/>
    </reaction>
</comment>
<comment type="subunit">
    <text evidence="1">Homohexamer. Forms an RuvA(8)-RuvB(12)-Holliday junction (HJ) complex. HJ DNA is sandwiched between 2 RuvA tetramers; dsDNA enters through RuvA and exits via RuvB. An RuvB hexamer assembles on each DNA strand where it exits the tetramer. Each RuvB hexamer is contacted by two RuvA subunits (via domain III) on 2 adjacent RuvB subunits; this complex drives branch migration. In the full resolvosome a probable DNA-RuvA(4)-RuvB(12)-RuvC(2) complex forms which resolves the HJ.</text>
</comment>
<comment type="subcellular location">
    <subcellularLocation>
        <location evidence="1">Cytoplasm</location>
    </subcellularLocation>
</comment>
<comment type="domain">
    <text evidence="1">Has 3 domains, the large (RuvB-L) and small ATPase (RuvB-S) domains and the C-terminal head (RuvB-H) domain. The head domain binds DNA, while the ATPase domains jointly bind ATP, ADP or are empty depending on the state of the subunit in the translocation cycle. During a single DNA translocation step the structure of each domain remains the same, but their relative positions change.</text>
</comment>
<comment type="similarity">
    <text evidence="1">Belongs to the RuvB family.</text>
</comment>
<protein>
    <recommendedName>
        <fullName evidence="1">Holliday junction branch migration complex subunit RuvB</fullName>
        <ecNumber evidence="1">3.6.4.-</ecNumber>
    </recommendedName>
</protein>
<keyword id="KW-0067">ATP-binding</keyword>
<keyword id="KW-0963">Cytoplasm</keyword>
<keyword id="KW-0227">DNA damage</keyword>
<keyword id="KW-0233">DNA recombination</keyword>
<keyword id="KW-0234">DNA repair</keyword>
<keyword id="KW-0238">DNA-binding</keyword>
<keyword id="KW-0378">Hydrolase</keyword>
<keyword id="KW-0547">Nucleotide-binding</keyword>
<dbReference type="EC" id="3.6.4.-" evidence="1"/>
<dbReference type="EMBL" id="CP001099">
    <property type="protein sequence ID" value="ACF10980.1"/>
    <property type="molecule type" value="Genomic_DNA"/>
</dbReference>
<dbReference type="RefSeq" id="WP_012501813.1">
    <property type="nucleotide sequence ID" value="NC_011027.1"/>
</dbReference>
<dbReference type="SMR" id="B3QM27"/>
<dbReference type="STRING" id="517417.Cpar_0558"/>
<dbReference type="KEGG" id="cpc:Cpar_0558"/>
<dbReference type="eggNOG" id="COG2255">
    <property type="taxonomic scope" value="Bacteria"/>
</dbReference>
<dbReference type="HOGENOM" id="CLU_055599_1_0_10"/>
<dbReference type="OrthoDB" id="9804478at2"/>
<dbReference type="Proteomes" id="UP000008811">
    <property type="component" value="Chromosome"/>
</dbReference>
<dbReference type="GO" id="GO:0005737">
    <property type="term" value="C:cytoplasm"/>
    <property type="evidence" value="ECO:0007669"/>
    <property type="project" value="UniProtKB-SubCell"/>
</dbReference>
<dbReference type="GO" id="GO:0048476">
    <property type="term" value="C:Holliday junction resolvase complex"/>
    <property type="evidence" value="ECO:0007669"/>
    <property type="project" value="UniProtKB-UniRule"/>
</dbReference>
<dbReference type="GO" id="GO:0005524">
    <property type="term" value="F:ATP binding"/>
    <property type="evidence" value="ECO:0007669"/>
    <property type="project" value="UniProtKB-UniRule"/>
</dbReference>
<dbReference type="GO" id="GO:0016887">
    <property type="term" value="F:ATP hydrolysis activity"/>
    <property type="evidence" value="ECO:0007669"/>
    <property type="project" value="InterPro"/>
</dbReference>
<dbReference type="GO" id="GO:0000400">
    <property type="term" value="F:four-way junction DNA binding"/>
    <property type="evidence" value="ECO:0007669"/>
    <property type="project" value="UniProtKB-UniRule"/>
</dbReference>
<dbReference type="GO" id="GO:0009378">
    <property type="term" value="F:four-way junction helicase activity"/>
    <property type="evidence" value="ECO:0007669"/>
    <property type="project" value="InterPro"/>
</dbReference>
<dbReference type="GO" id="GO:0006310">
    <property type="term" value="P:DNA recombination"/>
    <property type="evidence" value="ECO:0007669"/>
    <property type="project" value="UniProtKB-UniRule"/>
</dbReference>
<dbReference type="GO" id="GO:0006281">
    <property type="term" value="P:DNA repair"/>
    <property type="evidence" value="ECO:0007669"/>
    <property type="project" value="UniProtKB-UniRule"/>
</dbReference>
<dbReference type="CDD" id="cd00009">
    <property type="entry name" value="AAA"/>
    <property type="match status" value="1"/>
</dbReference>
<dbReference type="Gene3D" id="1.10.8.60">
    <property type="match status" value="1"/>
</dbReference>
<dbReference type="Gene3D" id="3.40.50.300">
    <property type="entry name" value="P-loop containing nucleotide triphosphate hydrolases"/>
    <property type="match status" value="1"/>
</dbReference>
<dbReference type="Gene3D" id="1.10.10.10">
    <property type="entry name" value="Winged helix-like DNA-binding domain superfamily/Winged helix DNA-binding domain"/>
    <property type="match status" value="1"/>
</dbReference>
<dbReference type="HAMAP" id="MF_00016">
    <property type="entry name" value="DNA_HJ_migration_RuvB"/>
    <property type="match status" value="1"/>
</dbReference>
<dbReference type="InterPro" id="IPR003593">
    <property type="entry name" value="AAA+_ATPase"/>
</dbReference>
<dbReference type="InterPro" id="IPR041445">
    <property type="entry name" value="AAA_lid_4"/>
</dbReference>
<dbReference type="InterPro" id="IPR004605">
    <property type="entry name" value="DNA_helicase_Holl-junc_RuvB"/>
</dbReference>
<dbReference type="InterPro" id="IPR027417">
    <property type="entry name" value="P-loop_NTPase"/>
</dbReference>
<dbReference type="InterPro" id="IPR008824">
    <property type="entry name" value="RuvB-like_N"/>
</dbReference>
<dbReference type="InterPro" id="IPR008823">
    <property type="entry name" value="RuvB_C"/>
</dbReference>
<dbReference type="InterPro" id="IPR036388">
    <property type="entry name" value="WH-like_DNA-bd_sf"/>
</dbReference>
<dbReference type="InterPro" id="IPR036390">
    <property type="entry name" value="WH_DNA-bd_sf"/>
</dbReference>
<dbReference type="NCBIfam" id="NF000868">
    <property type="entry name" value="PRK00080.1"/>
    <property type="match status" value="1"/>
</dbReference>
<dbReference type="NCBIfam" id="TIGR00635">
    <property type="entry name" value="ruvB"/>
    <property type="match status" value="1"/>
</dbReference>
<dbReference type="PANTHER" id="PTHR42848">
    <property type="match status" value="1"/>
</dbReference>
<dbReference type="PANTHER" id="PTHR42848:SF1">
    <property type="entry name" value="HOLLIDAY JUNCTION BRANCH MIGRATION COMPLEX SUBUNIT RUVB"/>
    <property type="match status" value="1"/>
</dbReference>
<dbReference type="Pfam" id="PF17864">
    <property type="entry name" value="AAA_lid_4"/>
    <property type="match status" value="1"/>
</dbReference>
<dbReference type="Pfam" id="PF05491">
    <property type="entry name" value="RuvB_C"/>
    <property type="match status" value="1"/>
</dbReference>
<dbReference type="Pfam" id="PF05496">
    <property type="entry name" value="RuvB_N"/>
    <property type="match status" value="1"/>
</dbReference>
<dbReference type="SMART" id="SM00382">
    <property type="entry name" value="AAA"/>
    <property type="match status" value="1"/>
</dbReference>
<dbReference type="SUPFAM" id="SSF52540">
    <property type="entry name" value="P-loop containing nucleoside triphosphate hydrolases"/>
    <property type="match status" value="1"/>
</dbReference>
<dbReference type="SUPFAM" id="SSF46785">
    <property type="entry name" value="Winged helix' DNA-binding domain"/>
    <property type="match status" value="1"/>
</dbReference>
<proteinExistence type="inferred from homology"/>
<evidence type="ECO:0000255" key="1">
    <source>
        <dbReference type="HAMAP-Rule" id="MF_00016"/>
    </source>
</evidence>
<feature type="chain" id="PRO_1000089628" description="Holliday junction branch migration complex subunit RuvB">
    <location>
        <begin position="1"/>
        <end position="342"/>
    </location>
</feature>
<feature type="region of interest" description="Large ATPase domain (RuvB-L)" evidence="1">
    <location>
        <begin position="1"/>
        <end position="182"/>
    </location>
</feature>
<feature type="region of interest" description="Small ATPAse domain (RuvB-S)" evidence="1">
    <location>
        <begin position="183"/>
        <end position="253"/>
    </location>
</feature>
<feature type="region of interest" description="Head domain (RuvB-H)" evidence="1">
    <location>
        <begin position="256"/>
        <end position="342"/>
    </location>
</feature>
<feature type="binding site" evidence="1">
    <location>
        <position position="21"/>
    </location>
    <ligand>
        <name>ATP</name>
        <dbReference type="ChEBI" id="CHEBI:30616"/>
    </ligand>
</feature>
<feature type="binding site" evidence="1">
    <location>
        <position position="22"/>
    </location>
    <ligand>
        <name>ATP</name>
        <dbReference type="ChEBI" id="CHEBI:30616"/>
    </ligand>
</feature>
<feature type="binding site" evidence="1">
    <location>
        <position position="63"/>
    </location>
    <ligand>
        <name>ATP</name>
        <dbReference type="ChEBI" id="CHEBI:30616"/>
    </ligand>
</feature>
<feature type="binding site" evidence="1">
    <location>
        <position position="66"/>
    </location>
    <ligand>
        <name>ATP</name>
        <dbReference type="ChEBI" id="CHEBI:30616"/>
    </ligand>
</feature>
<feature type="binding site" evidence="1">
    <location>
        <position position="67"/>
    </location>
    <ligand>
        <name>ATP</name>
        <dbReference type="ChEBI" id="CHEBI:30616"/>
    </ligand>
</feature>
<feature type="binding site" evidence="1">
    <location>
        <position position="67"/>
    </location>
    <ligand>
        <name>Mg(2+)</name>
        <dbReference type="ChEBI" id="CHEBI:18420"/>
    </ligand>
</feature>
<feature type="binding site" evidence="1">
    <location>
        <position position="68"/>
    </location>
    <ligand>
        <name>ATP</name>
        <dbReference type="ChEBI" id="CHEBI:30616"/>
    </ligand>
</feature>
<feature type="binding site" evidence="1">
    <location>
        <begin position="129"/>
        <end position="131"/>
    </location>
    <ligand>
        <name>ATP</name>
        <dbReference type="ChEBI" id="CHEBI:30616"/>
    </ligand>
</feature>
<feature type="binding site" evidence="1">
    <location>
        <position position="172"/>
    </location>
    <ligand>
        <name>ATP</name>
        <dbReference type="ChEBI" id="CHEBI:30616"/>
    </ligand>
</feature>
<feature type="binding site" evidence="1">
    <location>
        <position position="182"/>
    </location>
    <ligand>
        <name>ATP</name>
        <dbReference type="ChEBI" id="CHEBI:30616"/>
    </ligand>
</feature>
<feature type="binding site" evidence="1">
    <location>
        <position position="219"/>
    </location>
    <ligand>
        <name>ATP</name>
        <dbReference type="ChEBI" id="CHEBI:30616"/>
    </ligand>
</feature>
<feature type="binding site" evidence="1">
    <location>
        <position position="311"/>
    </location>
    <ligand>
        <name>DNA</name>
        <dbReference type="ChEBI" id="CHEBI:16991"/>
    </ligand>
</feature>
<feature type="binding site" evidence="1">
    <location>
        <position position="316"/>
    </location>
    <ligand>
        <name>DNA</name>
        <dbReference type="ChEBI" id="CHEBI:16991"/>
    </ligand>
</feature>
<reference key="1">
    <citation type="submission" date="2008-06" db="EMBL/GenBank/DDBJ databases">
        <title>Complete sequence of Chlorobaculum parvum NCIB 8327.</title>
        <authorList>
            <consortium name="US DOE Joint Genome Institute"/>
            <person name="Lucas S."/>
            <person name="Copeland A."/>
            <person name="Lapidus A."/>
            <person name="Glavina del Rio T."/>
            <person name="Dalin E."/>
            <person name="Tice H."/>
            <person name="Bruce D."/>
            <person name="Goodwin L."/>
            <person name="Pitluck S."/>
            <person name="Schmutz J."/>
            <person name="Larimer F."/>
            <person name="Land M."/>
            <person name="Hauser L."/>
            <person name="Kyrpides N."/>
            <person name="Mikhailova N."/>
            <person name="Zhao F."/>
            <person name="Li T."/>
            <person name="Liu Z."/>
            <person name="Overmann J."/>
            <person name="Bryant D.A."/>
            <person name="Richardson P."/>
        </authorList>
    </citation>
    <scope>NUCLEOTIDE SEQUENCE [LARGE SCALE GENOMIC DNA]</scope>
    <source>
        <strain>DSM 263 / NCIMB 8327</strain>
    </source>
</reference>
<sequence>MRIEALNTAPDATEVRFEEQIRPQSMSDFAGQKKLTDNLKVFITAARKRGDALDHVLLSGPPGLGKTTLAHIIAAEMGGGIKITSGPLIDKAGNLAGLLTSLKKGDILFIDEIHRLAPAVEEYLYSAMEDYRIDILLDSGPASRAVQLKLEPFTLVGATTRSGLLTSPLRARFGINSRLDYYSPELLQSIIVRAAGILNIGVDEDAAMEIARRSRGTPRIANRLLRRARDFAQVANEASISLAVARRTLESLEIDEGGLDDMDKKILEAIVRKFNGGPVGVASLAVSVGEEQDTIEEVYEPYLIQVGYLARTPRGRVATRLAMQRFSYPGMQDHGPLFDHNS</sequence>
<gene>
    <name evidence="1" type="primary">ruvB</name>
    <name type="ordered locus">Cpar_0558</name>
</gene>